<evidence type="ECO:0000255" key="1">
    <source>
        <dbReference type="HAMAP-Rule" id="MF_00686"/>
    </source>
</evidence>
<protein>
    <recommendedName>
        <fullName evidence="1">Probable Fe(2+)-trafficking protein</fullName>
    </recommendedName>
</protein>
<accession>Q31JF6</accession>
<proteinExistence type="inferred from homology"/>
<keyword id="KW-0408">Iron</keyword>
<feature type="chain" id="PRO_0000246121" description="Probable Fe(2+)-trafficking protein">
    <location>
        <begin position="1"/>
        <end position="90"/>
    </location>
</feature>
<dbReference type="EMBL" id="CP000109">
    <property type="protein sequence ID" value="ABB40717.1"/>
    <property type="molecule type" value="Genomic_DNA"/>
</dbReference>
<dbReference type="SMR" id="Q31JF6"/>
<dbReference type="STRING" id="317025.Tcr_0121"/>
<dbReference type="KEGG" id="tcx:Tcr_0121"/>
<dbReference type="eggNOG" id="COG2924">
    <property type="taxonomic scope" value="Bacteria"/>
</dbReference>
<dbReference type="HOGENOM" id="CLU_170994_0_0_6"/>
<dbReference type="OrthoDB" id="9804318at2"/>
<dbReference type="GO" id="GO:0005829">
    <property type="term" value="C:cytosol"/>
    <property type="evidence" value="ECO:0007669"/>
    <property type="project" value="TreeGrafter"/>
</dbReference>
<dbReference type="GO" id="GO:0005506">
    <property type="term" value="F:iron ion binding"/>
    <property type="evidence" value="ECO:0007669"/>
    <property type="project" value="UniProtKB-UniRule"/>
</dbReference>
<dbReference type="GO" id="GO:0034599">
    <property type="term" value="P:cellular response to oxidative stress"/>
    <property type="evidence" value="ECO:0007669"/>
    <property type="project" value="TreeGrafter"/>
</dbReference>
<dbReference type="FunFam" id="1.10.3880.10:FF:000001">
    <property type="entry name" value="Probable Fe(2+)-trafficking protein"/>
    <property type="match status" value="1"/>
</dbReference>
<dbReference type="Gene3D" id="1.10.3880.10">
    <property type="entry name" value="Fe(II) trafficking protein YggX"/>
    <property type="match status" value="1"/>
</dbReference>
<dbReference type="HAMAP" id="MF_00686">
    <property type="entry name" value="Fe_traffic_YggX"/>
    <property type="match status" value="1"/>
</dbReference>
<dbReference type="InterPro" id="IPR007457">
    <property type="entry name" value="Fe_traffick_prot_YggX"/>
</dbReference>
<dbReference type="InterPro" id="IPR036766">
    <property type="entry name" value="Fe_traffick_prot_YggX_sf"/>
</dbReference>
<dbReference type="NCBIfam" id="NF003817">
    <property type="entry name" value="PRK05408.1"/>
    <property type="match status" value="1"/>
</dbReference>
<dbReference type="PANTHER" id="PTHR36965">
    <property type="entry name" value="FE(2+)-TRAFFICKING PROTEIN-RELATED"/>
    <property type="match status" value="1"/>
</dbReference>
<dbReference type="PANTHER" id="PTHR36965:SF1">
    <property type="entry name" value="FE(2+)-TRAFFICKING PROTEIN-RELATED"/>
    <property type="match status" value="1"/>
</dbReference>
<dbReference type="Pfam" id="PF04362">
    <property type="entry name" value="Iron_traffic"/>
    <property type="match status" value="1"/>
</dbReference>
<dbReference type="PIRSF" id="PIRSF029827">
    <property type="entry name" value="Fe_traffic_YggX"/>
    <property type="match status" value="1"/>
</dbReference>
<dbReference type="SUPFAM" id="SSF111148">
    <property type="entry name" value="YggX-like"/>
    <property type="match status" value="1"/>
</dbReference>
<gene>
    <name type="ordered locus">Tcr_0121</name>
</gene>
<name>FETP_HYDCU</name>
<sequence>MTRMVNCVKMEQELEGLDFPPFPGDLGQKIYENVSKEAWKQWLAQQTILINEYRLSSLDPKAQNFLKEEMQKFLFGGEDLEMPEEFQAID</sequence>
<reference key="1">
    <citation type="journal article" date="2006" name="PLoS Biol.">
        <title>The genome of deep-sea vent chemolithoautotroph Thiomicrospira crunogena XCL-2.</title>
        <authorList>
            <person name="Scott K.M."/>
            <person name="Sievert S.M."/>
            <person name="Abril F.N."/>
            <person name="Ball L.A."/>
            <person name="Barrett C.J."/>
            <person name="Blake R.A."/>
            <person name="Boller A.J."/>
            <person name="Chain P.S.G."/>
            <person name="Clark J.A."/>
            <person name="Davis C.R."/>
            <person name="Detter C."/>
            <person name="Do K.F."/>
            <person name="Dobrinski K.P."/>
            <person name="Faza B.I."/>
            <person name="Fitzpatrick K.A."/>
            <person name="Freyermuth S.K."/>
            <person name="Harmer T.L."/>
            <person name="Hauser L.J."/>
            <person name="Huegler M."/>
            <person name="Kerfeld C.A."/>
            <person name="Klotz M.G."/>
            <person name="Kong W.W."/>
            <person name="Land M."/>
            <person name="Lapidus A."/>
            <person name="Larimer F.W."/>
            <person name="Longo D.L."/>
            <person name="Lucas S."/>
            <person name="Malfatti S.A."/>
            <person name="Massey S.E."/>
            <person name="Martin D.D."/>
            <person name="McCuddin Z."/>
            <person name="Meyer F."/>
            <person name="Moore J.L."/>
            <person name="Ocampo L.H. Jr."/>
            <person name="Paul J.H."/>
            <person name="Paulsen I.T."/>
            <person name="Reep D.K."/>
            <person name="Ren Q."/>
            <person name="Ross R.L."/>
            <person name="Sato P.Y."/>
            <person name="Thomas P."/>
            <person name="Tinkham L.E."/>
            <person name="Zeruth G.T."/>
        </authorList>
    </citation>
    <scope>NUCLEOTIDE SEQUENCE [LARGE SCALE GENOMIC DNA]</scope>
    <source>
        <strain>DSM 25203 / XCL-2</strain>
    </source>
</reference>
<organism>
    <name type="scientific">Hydrogenovibrio crunogenus (strain DSM 25203 / XCL-2)</name>
    <name type="common">Thiomicrospira crunogena</name>
    <dbReference type="NCBI Taxonomy" id="317025"/>
    <lineage>
        <taxon>Bacteria</taxon>
        <taxon>Pseudomonadati</taxon>
        <taxon>Pseudomonadota</taxon>
        <taxon>Gammaproteobacteria</taxon>
        <taxon>Thiotrichales</taxon>
        <taxon>Piscirickettsiaceae</taxon>
        <taxon>Hydrogenovibrio</taxon>
    </lineage>
</organism>
<comment type="function">
    <text evidence="1">Could be a mediator in iron transactions between iron acquisition and iron-requiring processes, such as synthesis and/or repair of Fe-S clusters in biosynthetic enzymes.</text>
</comment>
<comment type="similarity">
    <text evidence="1">Belongs to the Fe(2+)-trafficking protein family.</text>
</comment>